<reference key="1">
    <citation type="submission" date="2006-05" db="EMBL/GenBank/DDBJ databases">
        <title>Complete sequence of chromosome of Silicibacter sp. TM1040.</title>
        <authorList>
            <consortium name="US DOE Joint Genome Institute"/>
            <person name="Copeland A."/>
            <person name="Lucas S."/>
            <person name="Lapidus A."/>
            <person name="Barry K."/>
            <person name="Detter J.C."/>
            <person name="Glavina del Rio T."/>
            <person name="Hammon N."/>
            <person name="Israni S."/>
            <person name="Dalin E."/>
            <person name="Tice H."/>
            <person name="Pitluck S."/>
            <person name="Brettin T."/>
            <person name="Bruce D."/>
            <person name="Han C."/>
            <person name="Tapia R."/>
            <person name="Goodwin L."/>
            <person name="Thompson L.S."/>
            <person name="Gilna P."/>
            <person name="Schmutz J."/>
            <person name="Larimer F."/>
            <person name="Land M."/>
            <person name="Hauser L."/>
            <person name="Kyrpides N."/>
            <person name="Kim E."/>
            <person name="Belas R."/>
            <person name="Moran M.A."/>
            <person name="Buchan A."/>
            <person name="Gonzalez J.M."/>
            <person name="Schell M.A."/>
            <person name="Sun F."/>
            <person name="Richardson P."/>
        </authorList>
    </citation>
    <scope>NUCLEOTIDE SEQUENCE [LARGE SCALE GENOMIC DNA]</scope>
    <source>
        <strain>TM1040</strain>
    </source>
</reference>
<name>HIS7_RUEST</name>
<comment type="catalytic activity">
    <reaction evidence="1">
        <text>D-erythro-1-(imidazol-4-yl)glycerol 3-phosphate = 3-(imidazol-4-yl)-2-oxopropyl phosphate + H2O</text>
        <dbReference type="Rhea" id="RHEA:11040"/>
        <dbReference type="ChEBI" id="CHEBI:15377"/>
        <dbReference type="ChEBI" id="CHEBI:57766"/>
        <dbReference type="ChEBI" id="CHEBI:58278"/>
        <dbReference type="EC" id="4.2.1.19"/>
    </reaction>
</comment>
<comment type="pathway">
    <text evidence="1">Amino-acid biosynthesis; L-histidine biosynthesis; L-histidine from 5-phospho-alpha-D-ribose 1-diphosphate: step 6/9.</text>
</comment>
<comment type="subcellular location">
    <subcellularLocation>
        <location evidence="1">Cytoplasm</location>
    </subcellularLocation>
</comment>
<comment type="similarity">
    <text evidence="1">Belongs to the imidazoleglycerol-phosphate dehydratase family.</text>
</comment>
<evidence type="ECO:0000255" key="1">
    <source>
        <dbReference type="HAMAP-Rule" id="MF_00076"/>
    </source>
</evidence>
<gene>
    <name evidence="1" type="primary">hisB</name>
    <name type="ordered locus">TM1040_2033</name>
</gene>
<keyword id="KW-0028">Amino-acid biosynthesis</keyword>
<keyword id="KW-0963">Cytoplasm</keyword>
<keyword id="KW-0368">Histidine biosynthesis</keyword>
<keyword id="KW-0456">Lyase</keyword>
<keyword id="KW-1185">Reference proteome</keyword>
<sequence>MRTAQVSRSTAETEISVSVNLDGSGTYDNQTGVGFFDHMLDQLSRHSLIDMTIRAKGDYHIDDHHTVEDTGIALGQALVQALGDKKGINRYGECHLPMDDAQVRAALDLSARPFLVWNVDLPTQKIGSFDTELVREFFQALATHGGITLHIDQIHGVNSHHIAEAAFKAVARALRTAVEVDPRKADAVPSTKGAL</sequence>
<accession>Q1GF01</accession>
<organism>
    <name type="scientific">Ruegeria sp. (strain TM1040)</name>
    <name type="common">Silicibacter sp.</name>
    <dbReference type="NCBI Taxonomy" id="292414"/>
    <lineage>
        <taxon>Bacteria</taxon>
        <taxon>Pseudomonadati</taxon>
        <taxon>Pseudomonadota</taxon>
        <taxon>Alphaproteobacteria</taxon>
        <taxon>Rhodobacterales</taxon>
        <taxon>Roseobacteraceae</taxon>
        <taxon>Ruegeria</taxon>
    </lineage>
</organism>
<protein>
    <recommendedName>
        <fullName evidence="1">Imidazoleglycerol-phosphate dehydratase</fullName>
        <shortName evidence="1">IGPD</shortName>
        <ecNumber evidence="1">4.2.1.19</ecNumber>
    </recommendedName>
</protein>
<dbReference type="EC" id="4.2.1.19" evidence="1"/>
<dbReference type="EMBL" id="CP000377">
    <property type="protein sequence ID" value="ABF64765.1"/>
    <property type="molecule type" value="Genomic_DNA"/>
</dbReference>
<dbReference type="RefSeq" id="WP_011539357.1">
    <property type="nucleotide sequence ID" value="NC_008044.1"/>
</dbReference>
<dbReference type="SMR" id="Q1GF01"/>
<dbReference type="STRING" id="292414.TM1040_2033"/>
<dbReference type="KEGG" id="sit:TM1040_2033"/>
<dbReference type="eggNOG" id="COG0131">
    <property type="taxonomic scope" value="Bacteria"/>
</dbReference>
<dbReference type="HOGENOM" id="CLU_044308_2_0_5"/>
<dbReference type="OrthoDB" id="9813612at2"/>
<dbReference type="UniPathway" id="UPA00031">
    <property type="reaction ID" value="UER00011"/>
</dbReference>
<dbReference type="Proteomes" id="UP000000636">
    <property type="component" value="Chromosome"/>
</dbReference>
<dbReference type="GO" id="GO:0005737">
    <property type="term" value="C:cytoplasm"/>
    <property type="evidence" value="ECO:0007669"/>
    <property type="project" value="UniProtKB-SubCell"/>
</dbReference>
<dbReference type="GO" id="GO:0004424">
    <property type="term" value="F:imidazoleglycerol-phosphate dehydratase activity"/>
    <property type="evidence" value="ECO:0007669"/>
    <property type="project" value="UniProtKB-UniRule"/>
</dbReference>
<dbReference type="GO" id="GO:0000105">
    <property type="term" value="P:L-histidine biosynthetic process"/>
    <property type="evidence" value="ECO:0007669"/>
    <property type="project" value="UniProtKB-UniRule"/>
</dbReference>
<dbReference type="CDD" id="cd07914">
    <property type="entry name" value="IGPD"/>
    <property type="match status" value="1"/>
</dbReference>
<dbReference type="FunFam" id="3.30.230.40:FF:000001">
    <property type="entry name" value="Imidazoleglycerol-phosphate dehydratase HisB"/>
    <property type="match status" value="1"/>
</dbReference>
<dbReference type="FunFam" id="3.30.230.40:FF:000003">
    <property type="entry name" value="Imidazoleglycerol-phosphate dehydratase HisB"/>
    <property type="match status" value="1"/>
</dbReference>
<dbReference type="Gene3D" id="3.30.230.40">
    <property type="entry name" value="Imidazole glycerol phosphate dehydratase, domain 1"/>
    <property type="match status" value="2"/>
</dbReference>
<dbReference type="HAMAP" id="MF_00076">
    <property type="entry name" value="HisB"/>
    <property type="match status" value="1"/>
</dbReference>
<dbReference type="InterPro" id="IPR038494">
    <property type="entry name" value="IGPD_sf"/>
</dbReference>
<dbReference type="InterPro" id="IPR000807">
    <property type="entry name" value="ImidazoleglycerolP_deHydtase"/>
</dbReference>
<dbReference type="InterPro" id="IPR020565">
    <property type="entry name" value="ImidazoleglycerP_deHydtase_CS"/>
</dbReference>
<dbReference type="InterPro" id="IPR020568">
    <property type="entry name" value="Ribosomal_Su5_D2-typ_SF"/>
</dbReference>
<dbReference type="NCBIfam" id="NF002109">
    <property type="entry name" value="PRK00951.1-5"/>
    <property type="match status" value="1"/>
</dbReference>
<dbReference type="NCBIfam" id="NF002111">
    <property type="entry name" value="PRK00951.2-1"/>
    <property type="match status" value="1"/>
</dbReference>
<dbReference type="NCBIfam" id="NF002114">
    <property type="entry name" value="PRK00951.2-4"/>
    <property type="match status" value="1"/>
</dbReference>
<dbReference type="PANTHER" id="PTHR23133:SF2">
    <property type="entry name" value="IMIDAZOLEGLYCEROL-PHOSPHATE DEHYDRATASE"/>
    <property type="match status" value="1"/>
</dbReference>
<dbReference type="PANTHER" id="PTHR23133">
    <property type="entry name" value="IMIDAZOLEGLYCEROL-PHOSPHATE DEHYDRATASE HIS7"/>
    <property type="match status" value="1"/>
</dbReference>
<dbReference type="Pfam" id="PF00475">
    <property type="entry name" value="IGPD"/>
    <property type="match status" value="1"/>
</dbReference>
<dbReference type="SUPFAM" id="SSF54211">
    <property type="entry name" value="Ribosomal protein S5 domain 2-like"/>
    <property type="match status" value="2"/>
</dbReference>
<dbReference type="PROSITE" id="PS00954">
    <property type="entry name" value="IGP_DEHYDRATASE_1"/>
    <property type="match status" value="1"/>
</dbReference>
<dbReference type="PROSITE" id="PS00955">
    <property type="entry name" value="IGP_DEHYDRATASE_2"/>
    <property type="match status" value="1"/>
</dbReference>
<proteinExistence type="inferred from homology"/>
<feature type="chain" id="PRO_1000010351" description="Imidazoleglycerol-phosphate dehydratase">
    <location>
        <begin position="1"/>
        <end position="195"/>
    </location>
</feature>